<dbReference type="EMBL" id="CP001336">
    <property type="protein sequence ID" value="ACL18503.1"/>
    <property type="molecule type" value="Genomic_DNA"/>
</dbReference>
<dbReference type="RefSeq" id="WP_011459105.1">
    <property type="nucleotide sequence ID" value="NC_011830.1"/>
</dbReference>
<dbReference type="SMR" id="B8G1Y0"/>
<dbReference type="KEGG" id="dhd:Dhaf_0436"/>
<dbReference type="HOGENOM" id="CLU_098428_0_2_9"/>
<dbReference type="Proteomes" id="UP000007726">
    <property type="component" value="Chromosome"/>
</dbReference>
<dbReference type="GO" id="GO:1990904">
    <property type="term" value="C:ribonucleoprotein complex"/>
    <property type="evidence" value="ECO:0007669"/>
    <property type="project" value="UniProtKB-KW"/>
</dbReference>
<dbReference type="GO" id="GO:0005840">
    <property type="term" value="C:ribosome"/>
    <property type="evidence" value="ECO:0007669"/>
    <property type="project" value="UniProtKB-KW"/>
</dbReference>
<dbReference type="GO" id="GO:0019843">
    <property type="term" value="F:rRNA binding"/>
    <property type="evidence" value="ECO:0007669"/>
    <property type="project" value="UniProtKB-UniRule"/>
</dbReference>
<dbReference type="GO" id="GO:0003735">
    <property type="term" value="F:structural constituent of ribosome"/>
    <property type="evidence" value="ECO:0007669"/>
    <property type="project" value="InterPro"/>
</dbReference>
<dbReference type="GO" id="GO:0006412">
    <property type="term" value="P:translation"/>
    <property type="evidence" value="ECO:0007669"/>
    <property type="project" value="UniProtKB-UniRule"/>
</dbReference>
<dbReference type="FunFam" id="3.30.1370.30:FF:000002">
    <property type="entry name" value="30S ribosomal protein S8"/>
    <property type="match status" value="1"/>
</dbReference>
<dbReference type="FunFam" id="3.30.1490.10:FF:000001">
    <property type="entry name" value="30S ribosomal protein S8"/>
    <property type="match status" value="1"/>
</dbReference>
<dbReference type="Gene3D" id="3.30.1370.30">
    <property type="match status" value="1"/>
</dbReference>
<dbReference type="Gene3D" id="3.30.1490.10">
    <property type="match status" value="1"/>
</dbReference>
<dbReference type="HAMAP" id="MF_01302_B">
    <property type="entry name" value="Ribosomal_uS8_B"/>
    <property type="match status" value="1"/>
</dbReference>
<dbReference type="InterPro" id="IPR000630">
    <property type="entry name" value="Ribosomal_uS8"/>
</dbReference>
<dbReference type="InterPro" id="IPR047863">
    <property type="entry name" value="Ribosomal_uS8_CS"/>
</dbReference>
<dbReference type="InterPro" id="IPR035987">
    <property type="entry name" value="Ribosomal_uS8_sf"/>
</dbReference>
<dbReference type="NCBIfam" id="NF001109">
    <property type="entry name" value="PRK00136.1"/>
    <property type="match status" value="1"/>
</dbReference>
<dbReference type="PANTHER" id="PTHR11758">
    <property type="entry name" value="40S RIBOSOMAL PROTEIN S15A"/>
    <property type="match status" value="1"/>
</dbReference>
<dbReference type="Pfam" id="PF00410">
    <property type="entry name" value="Ribosomal_S8"/>
    <property type="match status" value="1"/>
</dbReference>
<dbReference type="SUPFAM" id="SSF56047">
    <property type="entry name" value="Ribosomal protein S8"/>
    <property type="match status" value="1"/>
</dbReference>
<dbReference type="PROSITE" id="PS00053">
    <property type="entry name" value="RIBOSOMAL_S8"/>
    <property type="match status" value="1"/>
</dbReference>
<sequence>MAMSDPIADFLTRIRNAGMVYHDKVEVPASNVKKAIAEILKEEGFIKDVEYISDNKQGVIRCYLKYGQNRERVITGLKRISRPGLRVYAKKDEVPKVLGGLGVAILSTSKGLMTDKRARQEGLGGEVLCYIW</sequence>
<evidence type="ECO:0000255" key="1">
    <source>
        <dbReference type="HAMAP-Rule" id="MF_01302"/>
    </source>
</evidence>
<evidence type="ECO:0000305" key="2"/>
<reference key="1">
    <citation type="journal article" date="2012" name="BMC Microbiol.">
        <title>Genome sequence of Desulfitobacterium hafniense DCB-2, a Gram-positive anaerobe capable of dehalogenation and metal reduction.</title>
        <authorList>
            <person name="Kim S.H."/>
            <person name="Harzman C."/>
            <person name="Davis J.K."/>
            <person name="Hutcheson R."/>
            <person name="Broderick J.B."/>
            <person name="Marsh T.L."/>
            <person name="Tiedje J.M."/>
        </authorList>
    </citation>
    <scope>NUCLEOTIDE SEQUENCE [LARGE SCALE GENOMIC DNA]</scope>
    <source>
        <strain>DSM 10664 / DCB-2</strain>
    </source>
</reference>
<comment type="function">
    <text evidence="1">One of the primary rRNA binding proteins, it binds directly to 16S rRNA central domain where it helps coordinate assembly of the platform of the 30S subunit.</text>
</comment>
<comment type="subunit">
    <text evidence="1">Part of the 30S ribosomal subunit. Contacts proteins S5 and S12.</text>
</comment>
<comment type="similarity">
    <text evidence="1">Belongs to the universal ribosomal protein uS8 family.</text>
</comment>
<keyword id="KW-0687">Ribonucleoprotein</keyword>
<keyword id="KW-0689">Ribosomal protein</keyword>
<keyword id="KW-0694">RNA-binding</keyword>
<keyword id="KW-0699">rRNA-binding</keyword>
<accession>B8G1Y0</accession>
<gene>
    <name evidence="1" type="primary">rpsH</name>
    <name type="ordered locus">Dhaf_0436</name>
</gene>
<protein>
    <recommendedName>
        <fullName evidence="1">Small ribosomal subunit protein uS8</fullName>
    </recommendedName>
    <alternativeName>
        <fullName evidence="2">30S ribosomal protein S8</fullName>
    </alternativeName>
</protein>
<name>RS8_DESHD</name>
<organism>
    <name type="scientific">Desulfitobacterium hafniense (strain DSM 10664 / DCB-2)</name>
    <dbReference type="NCBI Taxonomy" id="272564"/>
    <lineage>
        <taxon>Bacteria</taxon>
        <taxon>Bacillati</taxon>
        <taxon>Bacillota</taxon>
        <taxon>Clostridia</taxon>
        <taxon>Eubacteriales</taxon>
        <taxon>Desulfitobacteriaceae</taxon>
        <taxon>Desulfitobacterium</taxon>
    </lineage>
</organism>
<feature type="chain" id="PRO_1000165327" description="Small ribosomal subunit protein uS8">
    <location>
        <begin position="1"/>
        <end position="132"/>
    </location>
</feature>
<proteinExistence type="inferred from homology"/>